<comment type="mass spectrometry" mass="24890.23" method="Electrospray" evidence="1"/>
<feature type="chain" id="PRO_0000259415" description="Uncharacterized protein M6_Spy0233">
    <location>
        <begin position="1"/>
        <end position="248"/>
    </location>
</feature>
<reference evidence="3" key="1">
    <citation type="journal article" date="2004" name="J. Infect. Dis.">
        <title>Progress toward characterization of the group A Streptococcus metagenome: complete genome sequence of a macrolide-resistant serotype M6 strain.</title>
        <authorList>
            <person name="Banks D.J."/>
            <person name="Porcella S.F."/>
            <person name="Barbian K.D."/>
            <person name="Beres S.B."/>
            <person name="Philips L.E."/>
            <person name="Voyich J.M."/>
            <person name="DeLeo F.R."/>
            <person name="Martin J.M."/>
            <person name="Somerville G.A."/>
            <person name="Musser J.M."/>
        </authorList>
    </citation>
    <scope>NUCLEOTIDE SEQUENCE [LARGE SCALE GENOMIC DNA]</scope>
    <source>
        <strain>ATCC BAA-946 / MGAS10394</strain>
    </source>
</reference>
<reference evidence="2" key="2">
    <citation type="submission" date="2000-05" db="UniProtKB">
        <title>Two-dimensional gel electrophoresis map of Streptococcus pyogenes proteins.</title>
        <authorList>
            <person name="Hogan D.A."/>
            <person name="Du P."/>
            <person name="Stevenson T.I."/>
            <person name="Whitton M."/>
            <person name="Kilby G.W."/>
            <person name="Rogers J."/>
            <person name="VanBogelen R.A."/>
        </authorList>
    </citation>
    <scope>PROTEIN SEQUENCE OF 71-77; 98-116 AND 144-172</scope>
    <scope>MASS SPECTROMETRY</scope>
    <source>
        <strain evidence="1">JRS4 / Serotype M6</strain>
    </source>
</reference>
<dbReference type="EMBL" id="CP000003">
    <property type="protein sequence ID" value="AAT86368.1"/>
    <property type="molecule type" value="Genomic_DNA"/>
</dbReference>
<dbReference type="SMR" id="Q5XDZ5"/>
<dbReference type="KEGG" id="spa:M6_Spy0233"/>
<dbReference type="HOGENOM" id="CLU_040551_4_1_9"/>
<dbReference type="Proteomes" id="UP000001167">
    <property type="component" value="Chromosome"/>
</dbReference>
<dbReference type="Gene3D" id="3.60.160.10">
    <property type="entry name" value="Mitochondrial biogenesis AIM24"/>
    <property type="match status" value="1"/>
</dbReference>
<dbReference type="InterPro" id="IPR002838">
    <property type="entry name" value="AIM24"/>
</dbReference>
<dbReference type="InterPro" id="IPR036983">
    <property type="entry name" value="AIM24_sf"/>
</dbReference>
<dbReference type="InterPro" id="IPR016031">
    <property type="entry name" value="Trp_RNA-bd_attenuator-like_dom"/>
</dbReference>
<dbReference type="NCBIfam" id="TIGR00266">
    <property type="entry name" value="TIGR00266 family protein"/>
    <property type="match status" value="1"/>
</dbReference>
<dbReference type="PANTHER" id="PTHR43657:SF1">
    <property type="entry name" value="ALTERED INHERITANCE OF MITOCHONDRIA PROTEIN 24, MITOCHONDRIAL"/>
    <property type="match status" value="1"/>
</dbReference>
<dbReference type="PANTHER" id="PTHR43657">
    <property type="entry name" value="TRYPTOPHAN RNA-BINDING ATTENUATOR PROTEIN-LIKE PROTEIN"/>
    <property type="match status" value="1"/>
</dbReference>
<dbReference type="Pfam" id="PF01987">
    <property type="entry name" value="AIM24"/>
    <property type="match status" value="1"/>
</dbReference>
<dbReference type="SUPFAM" id="SSF51219">
    <property type="entry name" value="TRAP-like"/>
    <property type="match status" value="1"/>
</dbReference>
<accession>Q5XDZ5</accession>
<accession>P82551</accession>
<sequence length="248" mass="26982">MYQVIHTNKESKMVDNRMRFTIDRSMQFPLVEIDLEHGGSVYLQQGSMVYHTENVTLNTKLNGKGSGLGKLVGAIGRSMVSGESMFITQAMSDGDGKLALAPNTPGQIVALELGEKQYRLNDGAFLALDGSAQYKMERQNIGKALFGGQGGLFVMTTEGLGTLLANSFGSIKKITLDGGTMTIDNAHVVAWSRELDYDIHLENGFMQSIGTGEGVINTFRGHGEIYIQSLNLEQFAGTLKRYLPTSSN</sequence>
<organism>
    <name type="scientific">Streptococcus pyogenes serotype M6 (strain ATCC BAA-946 / MGAS10394)</name>
    <dbReference type="NCBI Taxonomy" id="286636"/>
    <lineage>
        <taxon>Bacteria</taxon>
        <taxon>Bacillati</taxon>
        <taxon>Bacillota</taxon>
        <taxon>Bacilli</taxon>
        <taxon>Lactobacillales</taxon>
        <taxon>Streptococcaceae</taxon>
        <taxon>Streptococcus</taxon>
    </lineage>
</organism>
<evidence type="ECO:0000269" key="1">
    <source ref="2"/>
</evidence>
<evidence type="ECO:0000305" key="2"/>
<evidence type="ECO:0000312" key="3">
    <source>
        <dbReference type="EMBL" id="AAT86368.1"/>
    </source>
</evidence>
<protein>
    <recommendedName>
        <fullName>Uncharacterized protein M6_Spy0233</fullName>
    </recommendedName>
</protein>
<gene>
    <name type="ordered locus">M6_Spy0233</name>
</gene>
<name>Y233_STRP6</name>
<keyword id="KW-0903">Direct protein sequencing</keyword>
<proteinExistence type="evidence at protein level"/>